<sequence>MATRRYSFGRTDEATHPDSMRASLAEFASTFIFVFAGEGSGLALVKIYQDSAFSAGELLALALAHAFALFAAVSASMHVSGGHVNPAVSFGALIGGRISVIRAVYYWIAQLLGSIVAALVLRLVTNNMRPSGFHVSPGVGVGHMFILEVVMTFGLMYTVYGTAIDPKRGAVSYIAPLAIGLIVGANILVGGPFDGACMNPALAFGPSLVGWQWHQHWIFWVGPLLGAALAALVYEYAVIPIEPPPHHHQPLATEDY</sequence>
<keyword id="KW-0903">Direct protein sequencing</keyword>
<keyword id="KW-0472">Membrane</keyword>
<keyword id="KW-0597">Phosphoprotein</keyword>
<keyword id="KW-0677">Repeat</keyword>
<keyword id="KW-0812">Transmembrane</keyword>
<keyword id="KW-1133">Transmembrane helix</keyword>
<keyword id="KW-0813">Transport</keyword>
<keyword id="KW-0926">Vacuole</keyword>
<protein>
    <recommendedName>
        <fullName>Probable aquaporin TIP-type alpha</fullName>
    </recommendedName>
    <alternativeName>
        <fullName>Alpha TIP</fullName>
    </alternativeName>
    <alternativeName>
        <fullName>Tonoplast intrinsic protein alpha</fullName>
    </alternativeName>
</protein>
<name>TIPA_PHAVU</name>
<dbReference type="EMBL" id="X62873">
    <property type="protein sequence ID" value="CAA44669.1"/>
    <property type="molecule type" value="mRNA"/>
</dbReference>
<dbReference type="PIR" id="JQ1106">
    <property type="entry name" value="JQ1106"/>
</dbReference>
<dbReference type="PIR" id="S26742">
    <property type="entry name" value="S26742"/>
</dbReference>
<dbReference type="SMR" id="P23958"/>
<dbReference type="TCDB" id="1.A.8.10.11">
    <property type="family name" value="the major intrinsic protein (mip) family"/>
</dbReference>
<dbReference type="iPTMnet" id="P23958"/>
<dbReference type="eggNOG" id="KOG0223">
    <property type="taxonomic scope" value="Eukaryota"/>
</dbReference>
<dbReference type="GO" id="GO:0005774">
    <property type="term" value="C:vacuolar membrane"/>
    <property type="evidence" value="ECO:0007669"/>
    <property type="project" value="UniProtKB-SubCell"/>
</dbReference>
<dbReference type="GO" id="GO:0015250">
    <property type="term" value="F:water channel activity"/>
    <property type="evidence" value="ECO:0007669"/>
    <property type="project" value="TreeGrafter"/>
</dbReference>
<dbReference type="GO" id="GO:0010431">
    <property type="term" value="P:seed maturation"/>
    <property type="evidence" value="ECO:0000304"/>
    <property type="project" value="AgBase"/>
</dbReference>
<dbReference type="CDD" id="cd00333">
    <property type="entry name" value="MIP"/>
    <property type="match status" value="1"/>
</dbReference>
<dbReference type="FunFam" id="1.20.1080.10:FF:000002">
    <property type="entry name" value="Probable aquaporin TIP1-1"/>
    <property type="match status" value="1"/>
</dbReference>
<dbReference type="Gene3D" id="1.20.1080.10">
    <property type="entry name" value="Glycerol uptake facilitator protein"/>
    <property type="match status" value="1"/>
</dbReference>
<dbReference type="InterPro" id="IPR023271">
    <property type="entry name" value="Aquaporin-like"/>
</dbReference>
<dbReference type="InterPro" id="IPR034294">
    <property type="entry name" value="Aquaporin_transptr"/>
</dbReference>
<dbReference type="InterPro" id="IPR000425">
    <property type="entry name" value="MIP"/>
</dbReference>
<dbReference type="InterPro" id="IPR022357">
    <property type="entry name" value="MIP_CS"/>
</dbReference>
<dbReference type="NCBIfam" id="TIGR00861">
    <property type="entry name" value="MIP"/>
    <property type="match status" value="1"/>
</dbReference>
<dbReference type="PANTHER" id="PTHR45665:SF23">
    <property type="entry name" value="AQUAPORIN TIP3-2-RELATED"/>
    <property type="match status" value="1"/>
</dbReference>
<dbReference type="PANTHER" id="PTHR45665">
    <property type="entry name" value="AQUAPORIN-8"/>
    <property type="match status" value="1"/>
</dbReference>
<dbReference type="Pfam" id="PF00230">
    <property type="entry name" value="MIP"/>
    <property type="match status" value="1"/>
</dbReference>
<dbReference type="PRINTS" id="PR00783">
    <property type="entry name" value="MINTRINSICP"/>
</dbReference>
<dbReference type="SUPFAM" id="SSF81338">
    <property type="entry name" value="Aquaporin-like"/>
    <property type="match status" value="1"/>
</dbReference>
<dbReference type="PROSITE" id="PS00221">
    <property type="entry name" value="MIP"/>
    <property type="match status" value="1"/>
</dbReference>
<comment type="function">
    <text>Channel protein in tonoplast. These proteins may allow the diffusion of amino acids and/or peptides from the vacuolar compartment to the cytoplasm.</text>
</comment>
<comment type="subcellular location">
    <subcellularLocation>
        <location>Vacuole membrane</location>
        <topology>Multi-pass membrane protein</topology>
    </subcellularLocation>
    <text>Tonoplast.</text>
</comment>
<comment type="tissue specificity">
    <text>Found in all seed tissues that are alive at seed maturity, but not in tissues that lose viability during seed maturation.</text>
</comment>
<comment type="domain">
    <text>Aquaporins contain two tandem repeats each containing three membrane-spanning domains and a pore-forming loop with the signature motif Asn-Pro-Ala (NPA).</text>
</comment>
<comment type="PTM">
    <text evidence="2">Phosphorylated by a tonoplast-bound calcium-dependent protein kinase.</text>
</comment>
<comment type="similarity">
    <text evidence="3">Belongs to the MIP/aquaporin (TC 1.A.8) family. TIP (TC 1.A.8.10) subfamily.</text>
</comment>
<feature type="chain" id="PRO_0000064042" description="Probable aquaporin TIP-type alpha">
    <location>
        <begin position="1"/>
        <end position="256"/>
    </location>
</feature>
<feature type="topological domain" description="Cytoplasmic" evidence="1">
    <location>
        <begin position="1"/>
        <end position="24"/>
    </location>
</feature>
<feature type="transmembrane region" description="Helical" evidence="1">
    <location>
        <begin position="25"/>
        <end position="44"/>
    </location>
</feature>
<feature type="topological domain" description="Vacuolar" evidence="1">
    <location>
        <begin position="45"/>
        <end position="57"/>
    </location>
</feature>
<feature type="transmembrane region" description="Helical" evidence="1">
    <location>
        <begin position="58"/>
        <end position="77"/>
    </location>
</feature>
<feature type="topological domain" description="Cytoplasmic" evidence="1">
    <location>
        <begin position="78"/>
        <end position="102"/>
    </location>
</feature>
<feature type="transmembrane region" description="Helical" evidence="1">
    <location>
        <begin position="103"/>
        <end position="121"/>
    </location>
</feature>
<feature type="topological domain" description="Vacuolar" evidence="1">
    <location>
        <begin position="122"/>
        <end position="143"/>
    </location>
</feature>
<feature type="transmembrane region" description="Helical" evidence="1">
    <location>
        <begin position="144"/>
        <end position="164"/>
    </location>
</feature>
<feature type="topological domain" description="Cytoplasmic" evidence="1">
    <location>
        <begin position="165"/>
        <end position="169"/>
    </location>
</feature>
<feature type="transmembrane region" description="Helical" evidence="1">
    <location>
        <begin position="170"/>
        <end position="189"/>
    </location>
</feature>
<feature type="topological domain" description="Vacuolar" evidence="1">
    <location>
        <begin position="190"/>
        <end position="216"/>
    </location>
</feature>
<feature type="transmembrane region" description="Helical" evidence="1">
    <location>
        <begin position="217"/>
        <end position="239"/>
    </location>
</feature>
<feature type="topological domain" description="Cytoplasmic" evidence="1">
    <location>
        <begin position="240"/>
        <end position="256"/>
    </location>
</feature>
<feature type="short sequence motif" description="NPA 1">
    <location>
        <begin position="85"/>
        <end position="87"/>
    </location>
</feature>
<feature type="short sequence motif" description="NPA 2">
    <location>
        <begin position="199"/>
        <end position="201"/>
    </location>
</feature>
<feature type="modified residue" description="Phosphoserine; by CPK" evidence="4">
    <location>
        <position position="7"/>
    </location>
</feature>
<organism>
    <name type="scientific">Phaseolus vulgaris</name>
    <name type="common">Kidney bean</name>
    <name type="synonym">French bean</name>
    <dbReference type="NCBI Taxonomy" id="3885"/>
    <lineage>
        <taxon>Eukaryota</taxon>
        <taxon>Viridiplantae</taxon>
        <taxon>Streptophyta</taxon>
        <taxon>Embryophyta</taxon>
        <taxon>Tracheophyta</taxon>
        <taxon>Spermatophyta</taxon>
        <taxon>Magnoliopsida</taxon>
        <taxon>eudicotyledons</taxon>
        <taxon>Gunneridae</taxon>
        <taxon>Pentapetalae</taxon>
        <taxon>rosids</taxon>
        <taxon>fabids</taxon>
        <taxon>Fabales</taxon>
        <taxon>Fabaceae</taxon>
        <taxon>Papilionoideae</taxon>
        <taxon>50 kb inversion clade</taxon>
        <taxon>NPAAA clade</taxon>
        <taxon>indigoferoid/millettioid clade</taxon>
        <taxon>Phaseoleae</taxon>
        <taxon>Phaseolus</taxon>
    </lineage>
</organism>
<evidence type="ECO:0000255" key="1"/>
<evidence type="ECO:0000269" key="2">
    <source>
    </source>
</evidence>
<evidence type="ECO:0000305" key="3"/>
<evidence type="ECO:0000305" key="4">
    <source>
    </source>
</evidence>
<accession>P23958</accession>
<proteinExistence type="evidence at protein level"/>
<reference key="1">
    <citation type="journal article" date="1990" name="Plant Cell">
        <title>An intrinsic tonoplast protein of protein storage vacuoles in seeds is structurally related to a bacterial solute transporter (GlpF).</title>
        <authorList>
            <person name="Johnson K.D."/>
            <person name="Hoefte H.R."/>
            <person name="Chrispeels M.J."/>
        </authorList>
    </citation>
    <scope>NUCLEOTIDE SEQUENCE [MRNA]</scope>
    <scope>PROTEIN SEQUENCE OF 11-21</scope>
    <source>
        <strain>cv. Greensleeves</strain>
        <tissue>Seed</tissue>
    </source>
</reference>
<reference key="2">
    <citation type="journal article" date="1992" name="Plant Physiol.">
        <title>Tonoplast-bound protein kinase phosphorylates tonoplast intrinsic protein.</title>
        <authorList>
            <person name="Johnson K.D."/>
            <person name="Chrispeels M.J."/>
        </authorList>
    </citation>
    <scope>PHOSPHORYLATION AT SER-7 BY CPK</scope>
</reference>